<reference key="1">
    <citation type="journal article" date="2007" name="BMC Biol.">
        <title>A clade uniting the green algae Mesostigma viride and Chlorokybus atmophyticus represents the deepest branch of the Streptophyta in chloroplast genome-based phylogenies.</title>
        <authorList>
            <person name="Lemieux C."/>
            <person name="Otis C."/>
            <person name="Turmel M."/>
        </authorList>
    </citation>
    <scope>NUCLEOTIDE SEQUENCE [LARGE SCALE GENOMIC DNA]</scope>
    <source>
        <strain>SAG 48.80</strain>
    </source>
</reference>
<accession>A2CI69</accession>
<dbReference type="EMBL" id="DQ422812">
    <property type="protein sequence ID" value="ABM87960.1"/>
    <property type="molecule type" value="Genomic_DNA"/>
</dbReference>
<dbReference type="RefSeq" id="YP_001019168.1">
    <property type="nucleotide sequence ID" value="NC_008822.1"/>
</dbReference>
<dbReference type="SMR" id="A2CI69"/>
<dbReference type="GeneID" id="4783255"/>
<dbReference type="GO" id="GO:0009507">
    <property type="term" value="C:chloroplast"/>
    <property type="evidence" value="ECO:0007669"/>
    <property type="project" value="UniProtKB-SubCell"/>
</dbReference>
<dbReference type="GO" id="GO:0003700">
    <property type="term" value="F:DNA-binding transcription factor activity"/>
    <property type="evidence" value="ECO:0007669"/>
    <property type="project" value="InterPro"/>
</dbReference>
<dbReference type="GO" id="GO:0000976">
    <property type="term" value="F:transcription cis-regulatory region binding"/>
    <property type="evidence" value="ECO:0007669"/>
    <property type="project" value="TreeGrafter"/>
</dbReference>
<dbReference type="CDD" id="cd08420">
    <property type="entry name" value="PBP2_CysL_like"/>
    <property type="match status" value="1"/>
</dbReference>
<dbReference type="FunFam" id="1.10.10.10:FF:000001">
    <property type="entry name" value="LysR family transcriptional regulator"/>
    <property type="match status" value="1"/>
</dbReference>
<dbReference type="Gene3D" id="3.40.190.290">
    <property type="match status" value="1"/>
</dbReference>
<dbReference type="Gene3D" id="1.10.10.10">
    <property type="entry name" value="Winged helix-like DNA-binding domain superfamily/Winged helix DNA-binding domain"/>
    <property type="match status" value="1"/>
</dbReference>
<dbReference type="InterPro" id="IPR005119">
    <property type="entry name" value="LysR_subst-bd"/>
</dbReference>
<dbReference type="InterPro" id="IPR000847">
    <property type="entry name" value="Tscrpt_reg_HTH_LysR"/>
</dbReference>
<dbReference type="InterPro" id="IPR036388">
    <property type="entry name" value="WH-like_DNA-bd_sf"/>
</dbReference>
<dbReference type="InterPro" id="IPR036390">
    <property type="entry name" value="WH_DNA-bd_sf"/>
</dbReference>
<dbReference type="PANTHER" id="PTHR30126">
    <property type="entry name" value="HTH-TYPE TRANSCRIPTIONAL REGULATOR"/>
    <property type="match status" value="1"/>
</dbReference>
<dbReference type="PANTHER" id="PTHR30126:SF39">
    <property type="entry name" value="HTH-TYPE TRANSCRIPTIONAL REGULATOR CYSL"/>
    <property type="match status" value="1"/>
</dbReference>
<dbReference type="Pfam" id="PF00126">
    <property type="entry name" value="HTH_1"/>
    <property type="match status" value="1"/>
</dbReference>
<dbReference type="Pfam" id="PF03466">
    <property type="entry name" value="LysR_substrate"/>
    <property type="match status" value="1"/>
</dbReference>
<dbReference type="PRINTS" id="PR00039">
    <property type="entry name" value="HTHLYSR"/>
</dbReference>
<dbReference type="SUPFAM" id="SSF53850">
    <property type="entry name" value="Periplasmic binding protein-like II"/>
    <property type="match status" value="1"/>
</dbReference>
<dbReference type="SUPFAM" id="SSF46785">
    <property type="entry name" value="Winged helix' DNA-binding domain"/>
    <property type="match status" value="1"/>
</dbReference>
<dbReference type="PROSITE" id="PS50931">
    <property type="entry name" value="HTH_LYSR"/>
    <property type="match status" value="1"/>
</dbReference>
<keyword id="KW-0150">Chloroplast</keyword>
<keyword id="KW-0238">DNA-binding</keyword>
<keyword id="KW-0934">Plastid</keyword>
<keyword id="KW-0804">Transcription</keyword>
<keyword id="KW-0805">Transcription regulation</keyword>
<comment type="function">
    <text evidence="1">Trans-acting transcriptional regulator of RuBisCO genes (rbcL and rbcS) expression.</text>
</comment>
<comment type="subcellular location">
    <subcellularLocation>
        <location>Plastid</location>
        <location>Chloroplast</location>
    </subcellularLocation>
</comment>
<comment type="similarity">
    <text evidence="3">Belongs to the LysR transcriptional regulatory family.</text>
</comment>
<evidence type="ECO:0000250" key="1"/>
<evidence type="ECO:0000255" key="2">
    <source>
        <dbReference type="PROSITE-ProRule" id="PRU00253"/>
    </source>
</evidence>
<evidence type="ECO:0000305" key="3"/>
<organism>
    <name type="scientific">Chlorokybus atmophyticus</name>
    <name type="common">Soil alga</name>
    <dbReference type="NCBI Taxonomy" id="3144"/>
    <lineage>
        <taxon>Eukaryota</taxon>
        <taxon>Viridiplantae</taxon>
        <taxon>Streptophyta</taxon>
        <taxon>Chlorokybophyceae</taxon>
        <taxon>Chlorokybales</taxon>
        <taxon>Chlorokybaceae</taxon>
        <taxon>Chlorokybus</taxon>
    </lineage>
</organism>
<gene>
    <name type="primary">rbcR</name>
    <name type="synonym">ycf30</name>
</gene>
<geneLocation type="chloroplast"/>
<name>RBCR_CHLAT</name>
<feature type="chain" id="PRO_0000280074" description="Probable RuBisCO transcriptional regulator">
    <location>
        <begin position="1"/>
        <end position="313"/>
    </location>
</feature>
<feature type="domain" description="HTH lysR-type" evidence="2">
    <location>
        <begin position="6"/>
        <end position="63"/>
    </location>
</feature>
<feature type="DNA-binding region" description="H-T-H motif" evidence="2">
    <location>
        <begin position="23"/>
        <end position="42"/>
    </location>
</feature>
<proteinExistence type="inferred from homology"/>
<protein>
    <recommendedName>
        <fullName>Probable RuBisCO transcriptional regulator</fullName>
    </recommendedName>
</protein>
<sequence>MNDLPFTLDQLLILKAIAAQGSFKKAADSLYISQPAVSMQVQNIEKQLNVQLLDRGGRRANLTDAGHLLLRYGDRILALCDETCRALEDLRNLQTGTLIIGASQTTGTYLMPQLISLFRKKYPQIMVQLHVDSTRHICWNVANGQIDIAIIGGEVPLELREILQVTPYADDELALILPCSHPFSQRQEIQKEDLYQLHFIALYASSTIRKVVDNILREHDIHSSRFFIEMELNSIEAIKSAVQSELGAAFVSASAITKELQLGLLHWAKIQNVILNRNLSIVTNPNRYRSKAAEKFSCEILASFQPPTVHPCG</sequence>